<sequence>MRSDMIKKGFDKAPHRSLLKATGLKDEDFHKPFVAICNSFIEIIPGHKHLNEFGRLVKEAVRAAGMVPFEFNTIGVDDGIAMGHIGMRYSLPSREIIADSVETVVNAHWFDGMICIPNCDKITPGMMMAAMRINIPTVFVSGGPMAAGKTSKGEVVDLSSVFEGVGAYQSGKISEEELKDIEDHGCPSCGSCSGMFTANSMNCLCEVLGLALPGNGSILATDSRREQLIQRAAESLKILMERDIKPRDIVTEEAIDDAFALDMAMGGSTNTVLHTLAIAQEAGLDYDMNRIDAVSRKVPHLCKVSPASNWHMEDIDRAGGMSAILKELSRKEGVLHFDRITVTGKTLRENIADAEIQDKEVIHSLENPHSQEGGLRILKGNLAKDGAVIKSGATEVKRFEGPCVIFNSQDEALAGIMLGKVKKGDVVVIRYEGPRGGPGMPEMLAPTSAIAGMGLGADVALLTDGRFSGASRGISVGHISPEAAAGGEIALLQQGDIVCIDVEERLLEVKVSDEELAKRRKEWKRPEPKVKTGWLGRYAQMVTSANTGAVLKMQNFD</sequence>
<feature type="chain" id="PRO_1000073965" description="Dihydroxy-acid dehydratase">
    <location>
        <begin position="1"/>
        <end position="557"/>
    </location>
</feature>
<feature type="active site" description="Proton acceptor" evidence="1">
    <location>
        <position position="468"/>
    </location>
</feature>
<feature type="binding site" evidence="1">
    <location>
        <position position="78"/>
    </location>
    <ligand>
        <name>Mg(2+)</name>
        <dbReference type="ChEBI" id="CHEBI:18420"/>
    </ligand>
</feature>
<feature type="binding site" evidence="1">
    <location>
        <position position="119"/>
    </location>
    <ligand>
        <name>[2Fe-2S] cluster</name>
        <dbReference type="ChEBI" id="CHEBI:190135"/>
    </ligand>
</feature>
<feature type="binding site" evidence="1">
    <location>
        <position position="120"/>
    </location>
    <ligand>
        <name>Mg(2+)</name>
        <dbReference type="ChEBI" id="CHEBI:18420"/>
    </ligand>
</feature>
<feature type="binding site" description="via carbamate group" evidence="1">
    <location>
        <position position="121"/>
    </location>
    <ligand>
        <name>Mg(2+)</name>
        <dbReference type="ChEBI" id="CHEBI:18420"/>
    </ligand>
</feature>
<feature type="binding site" evidence="1">
    <location>
        <position position="192"/>
    </location>
    <ligand>
        <name>[2Fe-2S] cluster</name>
        <dbReference type="ChEBI" id="CHEBI:190135"/>
    </ligand>
</feature>
<feature type="binding site" evidence="1">
    <location>
        <position position="442"/>
    </location>
    <ligand>
        <name>Mg(2+)</name>
        <dbReference type="ChEBI" id="CHEBI:18420"/>
    </ligand>
</feature>
<feature type="modified residue" description="N6-carboxylysine" evidence="1">
    <location>
        <position position="121"/>
    </location>
</feature>
<organism>
    <name type="scientific">Bacillus cytotoxicus (strain DSM 22905 / CIP 110041 / 391-98 / NVH 391-98)</name>
    <dbReference type="NCBI Taxonomy" id="315749"/>
    <lineage>
        <taxon>Bacteria</taxon>
        <taxon>Bacillati</taxon>
        <taxon>Bacillota</taxon>
        <taxon>Bacilli</taxon>
        <taxon>Bacillales</taxon>
        <taxon>Bacillaceae</taxon>
        <taxon>Bacillus</taxon>
        <taxon>Bacillus cereus group</taxon>
    </lineage>
</organism>
<reference key="1">
    <citation type="journal article" date="2008" name="Chem. Biol. Interact.">
        <title>Extending the Bacillus cereus group genomics to putative food-borne pathogens of different toxicity.</title>
        <authorList>
            <person name="Lapidus A."/>
            <person name="Goltsman E."/>
            <person name="Auger S."/>
            <person name="Galleron N."/>
            <person name="Segurens B."/>
            <person name="Dossat C."/>
            <person name="Land M.L."/>
            <person name="Broussolle V."/>
            <person name="Brillard J."/>
            <person name="Guinebretiere M.-H."/>
            <person name="Sanchis V."/>
            <person name="Nguen-the C."/>
            <person name="Lereclus D."/>
            <person name="Richardson P."/>
            <person name="Wincker P."/>
            <person name="Weissenbach J."/>
            <person name="Ehrlich S.D."/>
            <person name="Sorokin A."/>
        </authorList>
    </citation>
    <scope>NUCLEOTIDE SEQUENCE [LARGE SCALE GENOMIC DNA]</scope>
    <source>
        <strain>DSM 22905 / CIP 110041 / 391-98 / NVH 391-98</strain>
    </source>
</reference>
<gene>
    <name evidence="1" type="primary">ilvD</name>
    <name type="ordered locus">Bcer98_1446</name>
</gene>
<protein>
    <recommendedName>
        <fullName evidence="1">Dihydroxy-acid dehydratase</fullName>
        <shortName evidence="1">DAD</shortName>
        <ecNumber evidence="1">4.2.1.9</ecNumber>
    </recommendedName>
</protein>
<accession>A7GNQ7</accession>
<proteinExistence type="inferred from homology"/>
<name>ILVD_BACCN</name>
<keyword id="KW-0001">2Fe-2S</keyword>
<keyword id="KW-0028">Amino-acid biosynthesis</keyword>
<keyword id="KW-0100">Branched-chain amino acid biosynthesis</keyword>
<keyword id="KW-0408">Iron</keyword>
<keyword id="KW-0411">Iron-sulfur</keyword>
<keyword id="KW-0456">Lyase</keyword>
<keyword id="KW-0460">Magnesium</keyword>
<keyword id="KW-0479">Metal-binding</keyword>
<evidence type="ECO:0000255" key="1">
    <source>
        <dbReference type="HAMAP-Rule" id="MF_00012"/>
    </source>
</evidence>
<dbReference type="EC" id="4.2.1.9" evidence="1"/>
<dbReference type="EMBL" id="CP000764">
    <property type="protein sequence ID" value="ABS21765.1"/>
    <property type="molecule type" value="Genomic_DNA"/>
</dbReference>
<dbReference type="RefSeq" id="WP_012093939.1">
    <property type="nucleotide sequence ID" value="NC_009674.1"/>
</dbReference>
<dbReference type="SMR" id="A7GNQ7"/>
<dbReference type="STRING" id="315749.Bcer98_1446"/>
<dbReference type="GeneID" id="33896785"/>
<dbReference type="KEGG" id="bcy:Bcer98_1446"/>
<dbReference type="eggNOG" id="COG0129">
    <property type="taxonomic scope" value="Bacteria"/>
</dbReference>
<dbReference type="HOGENOM" id="CLU_014271_4_2_9"/>
<dbReference type="OrthoDB" id="9807077at2"/>
<dbReference type="UniPathway" id="UPA00047">
    <property type="reaction ID" value="UER00057"/>
</dbReference>
<dbReference type="UniPathway" id="UPA00049">
    <property type="reaction ID" value="UER00061"/>
</dbReference>
<dbReference type="Proteomes" id="UP000002300">
    <property type="component" value="Chromosome"/>
</dbReference>
<dbReference type="GO" id="GO:0005829">
    <property type="term" value="C:cytosol"/>
    <property type="evidence" value="ECO:0007669"/>
    <property type="project" value="TreeGrafter"/>
</dbReference>
<dbReference type="GO" id="GO:0051537">
    <property type="term" value="F:2 iron, 2 sulfur cluster binding"/>
    <property type="evidence" value="ECO:0007669"/>
    <property type="project" value="UniProtKB-UniRule"/>
</dbReference>
<dbReference type="GO" id="GO:0004160">
    <property type="term" value="F:dihydroxy-acid dehydratase activity"/>
    <property type="evidence" value="ECO:0007669"/>
    <property type="project" value="UniProtKB-UniRule"/>
</dbReference>
<dbReference type="GO" id="GO:0000287">
    <property type="term" value="F:magnesium ion binding"/>
    <property type="evidence" value="ECO:0007669"/>
    <property type="project" value="UniProtKB-UniRule"/>
</dbReference>
<dbReference type="GO" id="GO:0009097">
    <property type="term" value="P:isoleucine biosynthetic process"/>
    <property type="evidence" value="ECO:0007669"/>
    <property type="project" value="UniProtKB-UniRule"/>
</dbReference>
<dbReference type="GO" id="GO:0009099">
    <property type="term" value="P:L-valine biosynthetic process"/>
    <property type="evidence" value="ECO:0007669"/>
    <property type="project" value="UniProtKB-UniRule"/>
</dbReference>
<dbReference type="FunFam" id="3.50.30.80:FF:000001">
    <property type="entry name" value="Dihydroxy-acid dehydratase"/>
    <property type="match status" value="1"/>
</dbReference>
<dbReference type="Gene3D" id="3.50.30.80">
    <property type="entry name" value="IlvD/EDD C-terminal domain-like"/>
    <property type="match status" value="1"/>
</dbReference>
<dbReference type="HAMAP" id="MF_00012">
    <property type="entry name" value="IlvD"/>
    <property type="match status" value="1"/>
</dbReference>
<dbReference type="InterPro" id="IPR042096">
    <property type="entry name" value="Dihydro-acid_dehy_C"/>
</dbReference>
<dbReference type="InterPro" id="IPR004404">
    <property type="entry name" value="DihydroxyA_deHydtase"/>
</dbReference>
<dbReference type="InterPro" id="IPR020558">
    <property type="entry name" value="DiOHA_6PGluconate_deHydtase_CS"/>
</dbReference>
<dbReference type="InterPro" id="IPR056740">
    <property type="entry name" value="ILV_EDD_C"/>
</dbReference>
<dbReference type="InterPro" id="IPR000581">
    <property type="entry name" value="ILV_EDD_N"/>
</dbReference>
<dbReference type="InterPro" id="IPR037237">
    <property type="entry name" value="IlvD/EDD_N"/>
</dbReference>
<dbReference type="NCBIfam" id="TIGR00110">
    <property type="entry name" value="ilvD"/>
    <property type="match status" value="1"/>
</dbReference>
<dbReference type="NCBIfam" id="NF002068">
    <property type="entry name" value="PRK00911.1"/>
    <property type="match status" value="1"/>
</dbReference>
<dbReference type="PANTHER" id="PTHR43661">
    <property type="entry name" value="D-XYLONATE DEHYDRATASE"/>
    <property type="match status" value="1"/>
</dbReference>
<dbReference type="PANTHER" id="PTHR43661:SF3">
    <property type="entry name" value="D-XYLONATE DEHYDRATASE YAGF-RELATED"/>
    <property type="match status" value="1"/>
</dbReference>
<dbReference type="Pfam" id="PF24877">
    <property type="entry name" value="ILV_EDD_C"/>
    <property type="match status" value="1"/>
</dbReference>
<dbReference type="Pfam" id="PF00920">
    <property type="entry name" value="ILVD_EDD_N"/>
    <property type="match status" value="1"/>
</dbReference>
<dbReference type="SUPFAM" id="SSF143975">
    <property type="entry name" value="IlvD/EDD N-terminal domain-like"/>
    <property type="match status" value="1"/>
</dbReference>
<dbReference type="SUPFAM" id="SSF52016">
    <property type="entry name" value="LeuD/IlvD-like"/>
    <property type="match status" value="1"/>
</dbReference>
<dbReference type="PROSITE" id="PS00886">
    <property type="entry name" value="ILVD_EDD_1"/>
    <property type="match status" value="1"/>
</dbReference>
<dbReference type="PROSITE" id="PS00887">
    <property type="entry name" value="ILVD_EDD_2"/>
    <property type="match status" value="1"/>
</dbReference>
<comment type="function">
    <text evidence="1">Functions in the biosynthesis of branched-chain amino acids. Catalyzes the dehydration of (2R,3R)-2,3-dihydroxy-3-methylpentanoate (2,3-dihydroxy-3-methylvalerate) into 2-oxo-3-methylpentanoate (2-oxo-3-methylvalerate) and of (2R)-2,3-dihydroxy-3-methylbutanoate (2,3-dihydroxyisovalerate) into 2-oxo-3-methylbutanoate (2-oxoisovalerate), the penultimate precursor to L-isoleucine and L-valine, respectively.</text>
</comment>
<comment type="catalytic activity">
    <reaction evidence="1">
        <text>(2R)-2,3-dihydroxy-3-methylbutanoate = 3-methyl-2-oxobutanoate + H2O</text>
        <dbReference type="Rhea" id="RHEA:24809"/>
        <dbReference type="ChEBI" id="CHEBI:11851"/>
        <dbReference type="ChEBI" id="CHEBI:15377"/>
        <dbReference type="ChEBI" id="CHEBI:49072"/>
        <dbReference type="EC" id="4.2.1.9"/>
    </reaction>
    <physiologicalReaction direction="left-to-right" evidence="1">
        <dbReference type="Rhea" id="RHEA:24810"/>
    </physiologicalReaction>
</comment>
<comment type="catalytic activity">
    <reaction evidence="1">
        <text>(2R,3R)-2,3-dihydroxy-3-methylpentanoate = (S)-3-methyl-2-oxopentanoate + H2O</text>
        <dbReference type="Rhea" id="RHEA:27694"/>
        <dbReference type="ChEBI" id="CHEBI:15377"/>
        <dbReference type="ChEBI" id="CHEBI:35146"/>
        <dbReference type="ChEBI" id="CHEBI:49258"/>
        <dbReference type="EC" id="4.2.1.9"/>
    </reaction>
    <physiologicalReaction direction="left-to-right" evidence="1">
        <dbReference type="Rhea" id="RHEA:27695"/>
    </physiologicalReaction>
</comment>
<comment type="cofactor">
    <cofactor evidence="1">
        <name>[2Fe-2S] cluster</name>
        <dbReference type="ChEBI" id="CHEBI:190135"/>
    </cofactor>
    <text evidence="1">Binds 1 [2Fe-2S] cluster per subunit. This cluster acts as a Lewis acid cofactor.</text>
</comment>
<comment type="cofactor">
    <cofactor evidence="1">
        <name>Mg(2+)</name>
        <dbReference type="ChEBI" id="CHEBI:18420"/>
    </cofactor>
</comment>
<comment type="pathway">
    <text evidence="1">Amino-acid biosynthesis; L-isoleucine biosynthesis; L-isoleucine from 2-oxobutanoate: step 3/4.</text>
</comment>
<comment type="pathway">
    <text evidence="1">Amino-acid biosynthesis; L-valine biosynthesis; L-valine from pyruvate: step 3/4.</text>
</comment>
<comment type="subunit">
    <text evidence="1">Homodimer.</text>
</comment>
<comment type="similarity">
    <text evidence="1">Belongs to the IlvD/Edd family.</text>
</comment>